<gene>
    <name type="ordered locus">At5g23250</name>
    <name type="ORF">MKD15.11</name>
</gene>
<name>SUCA2_ARATH</name>
<comment type="function">
    <text evidence="1">Succinyl-CoA synthetase functions in the citric acid cycle (TCA), coupling the hydrolysis of succinyl-CoA to the synthesis of ATP and thus represents the only step of substrate-level phosphorylation in the TCA. The alpha subunit of the enzyme binds the substrates coenzyme A and phosphate, while succinate binding and nucleotide specificity is provided by the beta subunit.</text>
</comment>
<comment type="catalytic activity">
    <reaction evidence="1">
        <text>succinate + ATP + CoA = succinyl-CoA + ADP + phosphate</text>
        <dbReference type="Rhea" id="RHEA:17661"/>
        <dbReference type="ChEBI" id="CHEBI:30031"/>
        <dbReference type="ChEBI" id="CHEBI:30616"/>
        <dbReference type="ChEBI" id="CHEBI:43474"/>
        <dbReference type="ChEBI" id="CHEBI:57287"/>
        <dbReference type="ChEBI" id="CHEBI:57292"/>
        <dbReference type="ChEBI" id="CHEBI:456216"/>
        <dbReference type="EC" id="6.2.1.5"/>
    </reaction>
</comment>
<comment type="pathway">
    <text evidence="1">Carbohydrate metabolism; tricarboxylic acid cycle; succinate from succinyl-CoA (ligase route): step 1/1.</text>
</comment>
<comment type="subunit">
    <text evidence="1">Heterodimer of an alpha and a beta subunit.</text>
</comment>
<comment type="subcellular location">
    <subcellularLocation>
        <location evidence="1 2 5">Mitochondrion</location>
    </subcellularLocation>
</comment>
<comment type="alternative products">
    <event type="alternative splicing"/>
    <isoform>
        <id>Q8LAD2-1</id>
        <name>1</name>
        <sequence type="displayed"/>
    </isoform>
    <text>A number of isoforms are produced. According to EST sequences.</text>
</comment>
<comment type="similarity">
    <text evidence="1">Belongs to the succinate/malate CoA ligase alpha subunit family.</text>
</comment>
<comment type="sequence caution" evidence="4">
    <conflict type="frameshift">
        <sequence resource="EMBL-CDS" id="CAA48891"/>
    </conflict>
</comment>
<comment type="sequence caution" evidence="4">
    <conflict type="frameshift">
        <sequence resource="EMBL-CDS" id="CAA79188"/>
    </conflict>
</comment>
<evidence type="ECO:0000255" key="1">
    <source>
        <dbReference type="HAMAP-Rule" id="MF_03222"/>
    </source>
</evidence>
<evidence type="ECO:0000269" key="2">
    <source>
    </source>
</evidence>
<evidence type="ECO:0000269" key="3">
    <source>
    </source>
</evidence>
<evidence type="ECO:0000305" key="4"/>
<evidence type="ECO:0000305" key="5">
    <source>
    </source>
</evidence>
<feature type="transit peptide" description="Mitochondrion" evidence="3">
    <location>
        <begin position="1"/>
        <end position="37"/>
    </location>
</feature>
<feature type="chain" id="PRO_0000033336" description="Succinate--CoA ligase [ADP-forming] subunit alpha-2, mitochondrial">
    <location>
        <begin position="38"/>
        <end position="341"/>
    </location>
</feature>
<feature type="active site" description="Tele-phosphohistidine intermediate" evidence="1">
    <location>
        <position position="293"/>
    </location>
</feature>
<feature type="binding site" evidence="1">
    <location>
        <begin position="61"/>
        <end position="64"/>
    </location>
    <ligand>
        <name>CoA</name>
        <dbReference type="ChEBI" id="CHEBI:57287"/>
    </ligand>
</feature>
<feature type="binding site" evidence="1">
    <location>
        <position position="87"/>
    </location>
    <ligand>
        <name>CoA</name>
        <dbReference type="ChEBI" id="CHEBI:57287"/>
    </ligand>
</feature>
<feature type="binding site" evidence="1">
    <location>
        <begin position="140"/>
        <end position="142"/>
    </location>
    <ligand>
        <name>CoA</name>
        <dbReference type="ChEBI" id="CHEBI:57287"/>
    </ligand>
</feature>
<feature type="binding site" evidence="1">
    <location>
        <position position="204"/>
    </location>
    <ligand>
        <name>substrate</name>
        <note>ligand shared with subunit beta</note>
    </ligand>
</feature>
<feature type="sequence conflict" description="In Ref. 1; CAA48891 and 6; CAA79188." evidence="4" ref="1 6">
    <original>S</original>
    <variation>T</variation>
    <location>
        <position position="22"/>
    </location>
</feature>
<feature type="sequence conflict" description="In Ref. 1; CAA48891." evidence="4" ref="1">
    <original>A</original>
    <variation>R</variation>
    <location>
        <position position="296"/>
    </location>
</feature>
<feature type="sequence conflict" description="In Ref. 4; AAM65450." evidence="4" ref="4">
    <original>I</original>
    <variation>T</variation>
    <location>
        <position position="309"/>
    </location>
</feature>
<feature type="sequence conflict" description="In Ref. 1; CAA48891." evidence="4" ref="1">
    <original>I</original>
    <variation>L</variation>
    <location>
        <position position="326"/>
    </location>
</feature>
<organism>
    <name type="scientific">Arabidopsis thaliana</name>
    <name type="common">Mouse-ear cress</name>
    <dbReference type="NCBI Taxonomy" id="3702"/>
    <lineage>
        <taxon>Eukaryota</taxon>
        <taxon>Viridiplantae</taxon>
        <taxon>Streptophyta</taxon>
        <taxon>Embryophyta</taxon>
        <taxon>Tracheophyta</taxon>
        <taxon>Spermatophyta</taxon>
        <taxon>Magnoliopsida</taxon>
        <taxon>eudicotyledons</taxon>
        <taxon>Gunneridae</taxon>
        <taxon>Pentapetalae</taxon>
        <taxon>rosids</taxon>
        <taxon>malvids</taxon>
        <taxon>Brassicales</taxon>
        <taxon>Brassicaceae</taxon>
        <taxon>Camelineae</taxon>
        <taxon>Arabidopsis</taxon>
    </lineage>
</organism>
<protein>
    <recommendedName>
        <fullName evidence="1">Succinate--CoA ligase [ADP-forming] subunit alpha-2, mitochondrial</fullName>
        <ecNumber evidence="1">6.2.1.5</ecNumber>
    </recommendedName>
    <alternativeName>
        <fullName evidence="1">Succinyl-CoA synthetase subunit alpha-2</fullName>
        <shortName evidence="1">SCS-alpha-2</shortName>
    </alternativeName>
</protein>
<sequence length="341" mass="35317">MSRQVTRLLGSLRHSGGGCSGSSKVCSLTSLVQSRSFGTTPPPPAAVFVDKNTRVICQGITGKNGTFHTEQAIEYGTKMVAGVTPKKGGTEHLGLPVFNTVAEAKAETKANASVIYVPAPFAAAAIMEGLAAELDLIVCITEGIPQHDMVRVKAALNSQSKTRLIGPNCPGIIKPGECKIGIMPGYIHKPGKIGIVSRSGTLTYEAVFQTTAVGLGQSTCVGIGGDPFNGTNFVDCLEKFFVDPQTEGIVLIGEIGGTAEEDAAALIKENGTDKPVVAFIAGLTAPPGRRMGHAGAIVSGGKGTAQDKIKSLRDAGVKVVESPAKIGAAMFELFQERGLLK</sequence>
<accession>Q8LAD2</accession>
<accession>O82661</accession>
<accession>P53586</accession>
<accession>Q9FMX5</accession>
<keyword id="KW-0025">Alternative splicing</keyword>
<keyword id="KW-0436">Ligase</keyword>
<keyword id="KW-0496">Mitochondrion</keyword>
<keyword id="KW-0547">Nucleotide-binding</keyword>
<keyword id="KW-1185">Reference proteome</keyword>
<keyword id="KW-0809">Transit peptide</keyword>
<keyword id="KW-0816">Tricarboxylic acid cycle</keyword>
<proteinExistence type="evidence at protein level"/>
<dbReference type="EC" id="6.2.1.5" evidence="1"/>
<dbReference type="EMBL" id="X69138">
    <property type="protein sequence ID" value="CAA48891.1"/>
    <property type="status" value="ALT_FRAME"/>
    <property type="molecule type" value="mRNA"/>
</dbReference>
<dbReference type="EMBL" id="AB007648">
    <property type="protein sequence ID" value="BAB11180.1"/>
    <property type="molecule type" value="Genomic_DNA"/>
</dbReference>
<dbReference type="EMBL" id="CP002688">
    <property type="protein sequence ID" value="AED93141.1"/>
    <property type="molecule type" value="Genomic_DNA"/>
</dbReference>
<dbReference type="EMBL" id="AY092994">
    <property type="protein sequence ID" value="AAM12993.1"/>
    <property type="molecule type" value="mRNA"/>
</dbReference>
<dbReference type="EMBL" id="AY114607">
    <property type="protein sequence ID" value="AAM47926.1"/>
    <property type="molecule type" value="mRNA"/>
</dbReference>
<dbReference type="EMBL" id="AY087899">
    <property type="protein sequence ID" value="AAM65450.1"/>
    <property type="molecule type" value="mRNA"/>
</dbReference>
<dbReference type="EMBL" id="Z18444">
    <property type="protein sequence ID" value="CAA79188.1"/>
    <property type="status" value="ALT_FRAME"/>
    <property type="molecule type" value="mRNA"/>
</dbReference>
<dbReference type="PIR" id="S30579">
    <property type="entry name" value="S30579"/>
</dbReference>
<dbReference type="RefSeq" id="NP_197716.1">
    <molecule id="Q8LAD2-1"/>
    <property type="nucleotide sequence ID" value="NM_122231.4"/>
</dbReference>
<dbReference type="SMR" id="Q8LAD2"/>
<dbReference type="BioGRID" id="17664">
    <property type="interactions" value="18"/>
</dbReference>
<dbReference type="FunCoup" id="Q8LAD2">
    <property type="interactions" value="3552"/>
</dbReference>
<dbReference type="STRING" id="3702.Q8LAD2"/>
<dbReference type="iPTMnet" id="Q8LAD2"/>
<dbReference type="PaxDb" id="3702-AT5G23250.1"/>
<dbReference type="ProteomicsDB" id="245231">
    <molecule id="Q8LAD2-1"/>
</dbReference>
<dbReference type="EnsemblPlants" id="AT5G23250.1">
    <molecule id="Q8LAD2-1"/>
    <property type="protein sequence ID" value="AT5G23250.1"/>
    <property type="gene ID" value="AT5G23250"/>
</dbReference>
<dbReference type="GeneID" id="832389"/>
<dbReference type="Gramene" id="AT5G23250.1">
    <molecule id="Q8LAD2-1"/>
    <property type="protein sequence ID" value="AT5G23250.1"/>
    <property type="gene ID" value="AT5G23250"/>
</dbReference>
<dbReference type="KEGG" id="ath:AT5G23250"/>
<dbReference type="Araport" id="AT5G23250"/>
<dbReference type="TAIR" id="AT5G23250"/>
<dbReference type="eggNOG" id="KOG1255">
    <property type="taxonomic scope" value="Eukaryota"/>
</dbReference>
<dbReference type="InParanoid" id="Q8LAD2"/>
<dbReference type="OMA" id="VIICITE"/>
<dbReference type="OrthoDB" id="1664372at2759"/>
<dbReference type="PhylomeDB" id="Q8LAD2"/>
<dbReference type="BioCyc" id="ARA:AT5G23250-MONOMER"/>
<dbReference type="UniPathway" id="UPA00223">
    <property type="reaction ID" value="UER00999"/>
</dbReference>
<dbReference type="CD-CODE" id="4299E36E">
    <property type="entry name" value="Nucleolus"/>
</dbReference>
<dbReference type="PRO" id="PR:Q8LAD2"/>
<dbReference type="Proteomes" id="UP000006548">
    <property type="component" value="Chromosome 5"/>
</dbReference>
<dbReference type="ExpressionAtlas" id="Q8LAD2">
    <property type="expression patterns" value="baseline and differential"/>
</dbReference>
<dbReference type="GO" id="GO:0005739">
    <property type="term" value="C:mitochondrion"/>
    <property type="evidence" value="ECO:0007005"/>
    <property type="project" value="TAIR"/>
</dbReference>
<dbReference type="GO" id="GO:0005507">
    <property type="term" value="F:copper ion binding"/>
    <property type="evidence" value="ECO:0007005"/>
    <property type="project" value="TAIR"/>
</dbReference>
<dbReference type="GO" id="GO:0000166">
    <property type="term" value="F:nucleotide binding"/>
    <property type="evidence" value="ECO:0007669"/>
    <property type="project" value="UniProtKB-KW"/>
</dbReference>
<dbReference type="GO" id="GO:0004775">
    <property type="term" value="F:succinate-CoA ligase (ADP-forming) activity"/>
    <property type="evidence" value="ECO:0007669"/>
    <property type="project" value="UniProtKB-UniRule"/>
</dbReference>
<dbReference type="GO" id="GO:0006099">
    <property type="term" value="P:tricarboxylic acid cycle"/>
    <property type="evidence" value="ECO:0007669"/>
    <property type="project" value="UniProtKB-UniRule"/>
</dbReference>
<dbReference type="FunFam" id="3.40.50.720:FF:000002">
    <property type="entry name" value="Succinate--CoA ligase [ADP-forming] subunit alpha"/>
    <property type="match status" value="1"/>
</dbReference>
<dbReference type="FunFam" id="3.40.50.261:FF:000005">
    <property type="entry name" value="Succinate--CoA ligase [ADP-forming] subunit alpha, mitochondrial"/>
    <property type="match status" value="1"/>
</dbReference>
<dbReference type="Gene3D" id="3.40.50.720">
    <property type="entry name" value="NAD(P)-binding Rossmann-like Domain"/>
    <property type="match status" value="1"/>
</dbReference>
<dbReference type="Gene3D" id="3.40.50.261">
    <property type="entry name" value="Succinyl-CoA synthetase domains"/>
    <property type="match status" value="1"/>
</dbReference>
<dbReference type="HAMAP" id="MF_01988">
    <property type="entry name" value="Succ_CoA_alpha"/>
    <property type="match status" value="1"/>
</dbReference>
<dbReference type="InterPro" id="IPR017440">
    <property type="entry name" value="Cit_synth/succinyl-CoA_lig_AS"/>
</dbReference>
<dbReference type="InterPro" id="IPR033847">
    <property type="entry name" value="Citrt_syn/SCS-alpha_CS"/>
</dbReference>
<dbReference type="InterPro" id="IPR003781">
    <property type="entry name" value="CoA-bd"/>
</dbReference>
<dbReference type="InterPro" id="IPR005810">
    <property type="entry name" value="CoA_lig_alpha"/>
</dbReference>
<dbReference type="InterPro" id="IPR036291">
    <property type="entry name" value="NAD(P)-bd_dom_sf"/>
</dbReference>
<dbReference type="InterPro" id="IPR005811">
    <property type="entry name" value="SUCC_ACL_C"/>
</dbReference>
<dbReference type="InterPro" id="IPR016102">
    <property type="entry name" value="Succinyl-CoA_synth-like"/>
</dbReference>
<dbReference type="NCBIfam" id="NF004230">
    <property type="entry name" value="PRK05678.1"/>
    <property type="match status" value="1"/>
</dbReference>
<dbReference type="NCBIfam" id="TIGR01019">
    <property type="entry name" value="sucCoAalpha"/>
    <property type="match status" value="1"/>
</dbReference>
<dbReference type="PANTHER" id="PTHR11117:SF2">
    <property type="entry name" value="SUCCINATE--COA LIGASE [ADP_GDP-FORMING] SUBUNIT ALPHA, MITOCHONDRIAL"/>
    <property type="match status" value="1"/>
</dbReference>
<dbReference type="PANTHER" id="PTHR11117">
    <property type="entry name" value="SUCCINYL-COA LIGASE SUBUNIT ALPHA"/>
    <property type="match status" value="1"/>
</dbReference>
<dbReference type="Pfam" id="PF02629">
    <property type="entry name" value="CoA_binding"/>
    <property type="match status" value="1"/>
</dbReference>
<dbReference type="Pfam" id="PF00549">
    <property type="entry name" value="Ligase_CoA"/>
    <property type="match status" value="1"/>
</dbReference>
<dbReference type="PIRSF" id="PIRSF001553">
    <property type="entry name" value="SucCS_alpha"/>
    <property type="match status" value="1"/>
</dbReference>
<dbReference type="PRINTS" id="PR01798">
    <property type="entry name" value="SCOASYNTHASE"/>
</dbReference>
<dbReference type="SMART" id="SM00881">
    <property type="entry name" value="CoA_binding"/>
    <property type="match status" value="1"/>
</dbReference>
<dbReference type="SUPFAM" id="SSF51735">
    <property type="entry name" value="NAD(P)-binding Rossmann-fold domains"/>
    <property type="match status" value="1"/>
</dbReference>
<dbReference type="SUPFAM" id="SSF52210">
    <property type="entry name" value="Succinyl-CoA synthetase domains"/>
    <property type="match status" value="1"/>
</dbReference>
<dbReference type="PROSITE" id="PS01216">
    <property type="entry name" value="SUCCINYL_COA_LIG_1"/>
    <property type="match status" value="1"/>
</dbReference>
<dbReference type="PROSITE" id="PS00399">
    <property type="entry name" value="SUCCINYL_COA_LIG_2"/>
    <property type="match status" value="1"/>
</dbReference>
<reference key="1">
    <citation type="submission" date="1992-11" db="EMBL/GenBank/DDBJ databases">
        <authorList>
            <person name="Yu D.-Y."/>
            <person name="Quigley F."/>
            <person name="Mache R."/>
        </authorList>
    </citation>
    <scope>NUCLEOTIDE SEQUENCE [MRNA]</scope>
    <source>
        <strain>cv. C24</strain>
        <tissue>Flower bud</tissue>
    </source>
</reference>
<reference key="2">
    <citation type="journal article" date="1997" name="DNA Res.">
        <title>Structural analysis of Arabidopsis thaliana chromosome 5. III. Sequence features of the regions of 1,191,918 bp covered by seventeen physically assigned P1 clones.</title>
        <authorList>
            <person name="Nakamura Y."/>
            <person name="Sato S."/>
            <person name="Kaneko T."/>
            <person name="Kotani H."/>
            <person name="Asamizu E."/>
            <person name="Miyajima N."/>
            <person name="Tabata S."/>
        </authorList>
    </citation>
    <scope>NUCLEOTIDE SEQUENCE [LARGE SCALE GENOMIC DNA]</scope>
    <source>
        <strain>cv. Columbia</strain>
    </source>
</reference>
<reference key="3">
    <citation type="journal article" date="2017" name="Plant J.">
        <title>Araport11: a complete reannotation of the Arabidopsis thaliana reference genome.</title>
        <authorList>
            <person name="Cheng C.Y."/>
            <person name="Krishnakumar V."/>
            <person name="Chan A.P."/>
            <person name="Thibaud-Nissen F."/>
            <person name="Schobel S."/>
            <person name="Town C.D."/>
        </authorList>
    </citation>
    <scope>GENOME REANNOTATION</scope>
    <source>
        <strain>cv. Columbia</strain>
    </source>
</reference>
<reference key="4">
    <citation type="journal article" date="2003" name="Science">
        <title>Empirical analysis of transcriptional activity in the Arabidopsis genome.</title>
        <authorList>
            <person name="Yamada K."/>
            <person name="Lim J."/>
            <person name="Dale J.M."/>
            <person name="Chen H."/>
            <person name="Shinn P."/>
            <person name="Palm C.J."/>
            <person name="Southwick A.M."/>
            <person name="Wu H.C."/>
            <person name="Kim C.J."/>
            <person name="Nguyen M."/>
            <person name="Pham P.K."/>
            <person name="Cheuk R.F."/>
            <person name="Karlin-Newmann G."/>
            <person name="Liu S.X."/>
            <person name="Lam B."/>
            <person name="Sakano H."/>
            <person name="Wu T."/>
            <person name="Yu G."/>
            <person name="Miranda M."/>
            <person name="Quach H.L."/>
            <person name="Tripp M."/>
            <person name="Chang C.H."/>
            <person name="Lee J.M."/>
            <person name="Toriumi M.J."/>
            <person name="Chan M.M."/>
            <person name="Tang C.C."/>
            <person name="Onodera C.S."/>
            <person name="Deng J.M."/>
            <person name="Akiyama K."/>
            <person name="Ansari Y."/>
            <person name="Arakawa T."/>
            <person name="Banh J."/>
            <person name="Banno F."/>
            <person name="Bowser L."/>
            <person name="Brooks S.Y."/>
            <person name="Carninci P."/>
            <person name="Chao Q."/>
            <person name="Choy N."/>
            <person name="Enju A."/>
            <person name="Goldsmith A.D."/>
            <person name="Gurjal M."/>
            <person name="Hansen N.F."/>
            <person name="Hayashizaki Y."/>
            <person name="Johnson-Hopson C."/>
            <person name="Hsuan V.W."/>
            <person name="Iida K."/>
            <person name="Karnes M."/>
            <person name="Khan S."/>
            <person name="Koesema E."/>
            <person name="Ishida J."/>
            <person name="Jiang P.X."/>
            <person name="Jones T."/>
            <person name="Kawai J."/>
            <person name="Kamiya A."/>
            <person name="Meyers C."/>
            <person name="Nakajima M."/>
            <person name="Narusaka M."/>
            <person name="Seki M."/>
            <person name="Sakurai T."/>
            <person name="Satou M."/>
            <person name="Tamse R."/>
            <person name="Vaysberg M."/>
            <person name="Wallender E.K."/>
            <person name="Wong C."/>
            <person name="Yamamura Y."/>
            <person name="Yuan S."/>
            <person name="Shinozaki K."/>
            <person name="Davis R.W."/>
            <person name="Theologis A."/>
            <person name="Ecker J.R."/>
        </authorList>
    </citation>
    <scope>NUCLEOTIDE SEQUENCE [LARGE SCALE MRNA]</scope>
    <source>
        <strain>cv. Columbia</strain>
    </source>
</reference>
<reference key="5">
    <citation type="submission" date="2002-03" db="EMBL/GenBank/DDBJ databases">
        <title>Full-length cDNA from Arabidopsis thaliana.</title>
        <authorList>
            <person name="Brover V.V."/>
            <person name="Troukhan M.E."/>
            <person name="Alexandrov N.A."/>
            <person name="Lu Y.-P."/>
            <person name="Flavell R.B."/>
            <person name="Feldmann K.A."/>
        </authorList>
    </citation>
    <scope>NUCLEOTIDE SEQUENCE [LARGE SCALE MRNA]</scope>
</reference>
<reference key="6">
    <citation type="journal article" date="1993" name="Plant J.">
        <title>An inventory of 1152 expressed sequence tags obtained by partial sequencing of cDNAs from Arabidopsis thaliana.</title>
        <authorList>
            <person name="Hoefte H."/>
            <person name="Desprez T."/>
            <person name="Amselem J."/>
            <person name="Chiapello H."/>
            <person name="Rouze P."/>
            <person name="Caboche M."/>
            <person name="Moisan A."/>
            <person name="Jourjon M.-F."/>
            <person name="Charpenteau J.-L."/>
            <person name="Berthomieu P."/>
            <person name="Guerrier D."/>
            <person name="Giraudat J."/>
            <person name="Quigley F."/>
            <person name="Thomas F."/>
            <person name="Yu D.-Y."/>
            <person name="Mache R."/>
            <person name="Raynal M."/>
            <person name="Cooke R."/>
            <person name="Grellet F."/>
            <person name="Delseny M."/>
            <person name="Parmentier Y."/>
            <person name="de Marcillac G."/>
            <person name="Gigot C."/>
            <person name="Fleck J."/>
            <person name="Philipps G."/>
            <person name="Axelos M."/>
            <person name="Bardet C."/>
            <person name="Tremousaygue D."/>
            <person name="Lescure B."/>
        </authorList>
    </citation>
    <scope>NUCLEOTIDE SEQUENCE [LARGE SCALE MRNA] OF 1-116</scope>
    <source>
        <strain>cv. C24</strain>
        <tissue>Flower bud</tissue>
    </source>
</reference>
<reference key="7">
    <citation type="journal article" date="2004" name="Plant Cell">
        <title>Experimental analysis of the Arabidopsis mitochondrial proteome highlights signaling and regulatory components, provides assessment of targeting prediction programs, and indicates plant-specific mitochondrial proteins.</title>
        <authorList>
            <person name="Heazlewood J.L."/>
            <person name="Tonti-Filippini J.S."/>
            <person name="Gout A.M."/>
            <person name="Day D.A."/>
            <person name="Whelan J."/>
            <person name="Millar A.H."/>
        </authorList>
    </citation>
    <scope>IDENTIFICATION BY MASS SPECTROMETRY</scope>
    <scope>SUBCELLULAR LOCATION [LARGE SCALE ANALYSIS]</scope>
    <source>
        <strain>cv. Landsberg erecta</strain>
    </source>
</reference>
<reference key="8">
    <citation type="journal article" date="2015" name="J. Exp. Bot.">
        <title>Identification of cleavage sites and substrate proteins for two mitochondrial intermediate peptidases in Arabidopsis thaliana.</title>
        <authorList>
            <person name="Carrie C."/>
            <person name="Venne A.S."/>
            <person name="Zahedi R.P."/>
            <person name="Soll J."/>
        </authorList>
    </citation>
    <scope>IDENTIFICATION BY MASS SPECTROMETRY</scope>
    <scope>CLEAVAGE OF TRANSIT PEPTIDE AFTER PHE-37</scope>
</reference>